<evidence type="ECO:0000255" key="1">
    <source>
        <dbReference type="HAMAP-Rule" id="MF_00634"/>
    </source>
</evidence>
<comment type="similarity">
    <text evidence="1">Belongs to the UPF0235 family.</text>
</comment>
<dbReference type="EMBL" id="CP000961">
    <property type="protein sequence ID" value="ACA85621.1"/>
    <property type="molecule type" value="Genomic_DNA"/>
</dbReference>
<dbReference type="RefSeq" id="WP_012323967.1">
    <property type="nucleotide sequence ID" value="NC_010506.1"/>
</dbReference>
<dbReference type="SMR" id="B1KIX3"/>
<dbReference type="STRING" id="392500.Swoo_1329"/>
<dbReference type="KEGG" id="swd:Swoo_1329"/>
<dbReference type="eggNOG" id="COG1872">
    <property type="taxonomic scope" value="Bacteria"/>
</dbReference>
<dbReference type="HOGENOM" id="CLU_130694_5_0_6"/>
<dbReference type="Proteomes" id="UP000002168">
    <property type="component" value="Chromosome"/>
</dbReference>
<dbReference type="GO" id="GO:0005737">
    <property type="term" value="C:cytoplasm"/>
    <property type="evidence" value="ECO:0007669"/>
    <property type="project" value="TreeGrafter"/>
</dbReference>
<dbReference type="Gene3D" id="3.30.1200.10">
    <property type="entry name" value="YggU-like"/>
    <property type="match status" value="1"/>
</dbReference>
<dbReference type="HAMAP" id="MF_00634">
    <property type="entry name" value="UPF0235"/>
    <property type="match status" value="1"/>
</dbReference>
<dbReference type="InterPro" id="IPR003746">
    <property type="entry name" value="DUF167"/>
</dbReference>
<dbReference type="InterPro" id="IPR036591">
    <property type="entry name" value="YggU-like_sf"/>
</dbReference>
<dbReference type="NCBIfam" id="TIGR00251">
    <property type="entry name" value="DUF167 family protein"/>
    <property type="match status" value="1"/>
</dbReference>
<dbReference type="NCBIfam" id="NF003466">
    <property type="entry name" value="PRK05090.1"/>
    <property type="match status" value="1"/>
</dbReference>
<dbReference type="PANTHER" id="PTHR13420">
    <property type="entry name" value="UPF0235 PROTEIN C15ORF40"/>
    <property type="match status" value="1"/>
</dbReference>
<dbReference type="PANTHER" id="PTHR13420:SF7">
    <property type="entry name" value="UPF0235 PROTEIN C15ORF40"/>
    <property type="match status" value="1"/>
</dbReference>
<dbReference type="Pfam" id="PF02594">
    <property type="entry name" value="DUF167"/>
    <property type="match status" value="1"/>
</dbReference>
<dbReference type="SMART" id="SM01152">
    <property type="entry name" value="DUF167"/>
    <property type="match status" value="1"/>
</dbReference>
<dbReference type="SUPFAM" id="SSF69786">
    <property type="entry name" value="YggU-like"/>
    <property type="match status" value="1"/>
</dbReference>
<accession>B1KIX3</accession>
<proteinExistence type="inferred from homology"/>
<reference key="1">
    <citation type="submission" date="2008-02" db="EMBL/GenBank/DDBJ databases">
        <title>Complete sequence of Shewanella woodyi ATCC 51908.</title>
        <authorList>
            <consortium name="US DOE Joint Genome Institute"/>
            <person name="Copeland A."/>
            <person name="Lucas S."/>
            <person name="Lapidus A."/>
            <person name="Glavina del Rio T."/>
            <person name="Dalin E."/>
            <person name="Tice H."/>
            <person name="Bruce D."/>
            <person name="Goodwin L."/>
            <person name="Pitluck S."/>
            <person name="Sims D."/>
            <person name="Brettin T."/>
            <person name="Detter J.C."/>
            <person name="Han C."/>
            <person name="Kuske C.R."/>
            <person name="Schmutz J."/>
            <person name="Larimer F."/>
            <person name="Land M."/>
            <person name="Hauser L."/>
            <person name="Kyrpides N."/>
            <person name="Lykidis A."/>
            <person name="Zhao J.-S."/>
            <person name="Richardson P."/>
        </authorList>
    </citation>
    <scope>NUCLEOTIDE SEQUENCE [LARGE SCALE GENOMIC DNA]</scope>
    <source>
        <strain>ATCC 51908 / MS32</strain>
    </source>
</reference>
<feature type="chain" id="PRO_1000130714" description="UPF0235 protein Swoo_1329">
    <location>
        <begin position="1"/>
        <end position="95"/>
    </location>
</feature>
<protein>
    <recommendedName>
        <fullName evidence="1">UPF0235 protein Swoo_1329</fullName>
    </recommendedName>
</protein>
<sequence length="95" mass="10470">MAPVIKQQDDLLLNLYIQPKASRDQIVGVHGEELKIAITAPPVDGKANAHLIKYLSKAFKVPKGDINILKGEQGRHKQVKVISPRVIPENISSQL</sequence>
<gene>
    <name type="ordered locus">Swoo_1329</name>
</gene>
<organism>
    <name type="scientific">Shewanella woodyi (strain ATCC 51908 / MS32)</name>
    <dbReference type="NCBI Taxonomy" id="392500"/>
    <lineage>
        <taxon>Bacteria</taxon>
        <taxon>Pseudomonadati</taxon>
        <taxon>Pseudomonadota</taxon>
        <taxon>Gammaproteobacteria</taxon>
        <taxon>Alteromonadales</taxon>
        <taxon>Shewanellaceae</taxon>
        <taxon>Shewanella</taxon>
    </lineage>
</organism>
<name>Y1329_SHEWM</name>
<keyword id="KW-1185">Reference proteome</keyword>